<sequence>DGYTPRL</sequence>
<comment type="function">
    <text evidence="1">Myoactive.</text>
</comment>
<comment type="subcellular location">
    <subcellularLocation>
        <location evidence="6">Secreted</location>
    </subcellularLocation>
</comment>
<comment type="similarity">
    <text evidence="2">Belongs to the pyrokinin family.</text>
</comment>
<proteinExistence type="evidence at protein level"/>
<evidence type="ECO:0000250" key="1">
    <source>
        <dbReference type="UniProtKB" id="P82619"/>
    </source>
</evidence>
<evidence type="ECO:0000255" key="2"/>
<evidence type="ECO:0000269" key="3">
    <source>
    </source>
</evidence>
<evidence type="ECO:0000303" key="4">
    <source>
    </source>
</evidence>
<evidence type="ECO:0000305" key="5"/>
<evidence type="ECO:0000305" key="6">
    <source>
    </source>
</evidence>
<dbReference type="GO" id="GO:0005576">
    <property type="term" value="C:extracellular region"/>
    <property type="evidence" value="ECO:0007669"/>
    <property type="project" value="UniProtKB-SubCell"/>
</dbReference>
<dbReference type="GO" id="GO:0007218">
    <property type="term" value="P:neuropeptide signaling pathway"/>
    <property type="evidence" value="ECO:0007669"/>
    <property type="project" value="UniProtKB-KW"/>
</dbReference>
<name>PPK1_HEMMO</name>
<reference evidence="5" key="1">
    <citation type="journal article" date="2012" name="Syst. Biol.">
        <title>Peptidomics-based phylogeny and biogeography of Mantophasmatodea (Hexapoda).</title>
        <authorList>
            <person name="Predel R."/>
            <person name="Neupert S."/>
            <person name="Huetteroth W."/>
            <person name="Kahnt J."/>
            <person name="Waidelich D."/>
            <person name="Roth S."/>
        </authorList>
    </citation>
    <scope>PROTEIN SEQUENCE</scope>
    <scope>AMIDATION AT LEU-7</scope>
    <source>
        <tissue evidence="3">Corpora cardiaca</tissue>
    </source>
</reference>
<organism>
    <name type="scientific">Hemilobophasma montaguense</name>
    <name type="common">Gladiator</name>
    <name type="synonym">Heel-walker</name>
    <dbReference type="NCBI Taxonomy" id="253130"/>
    <lineage>
        <taxon>Eukaryota</taxon>
        <taxon>Metazoa</taxon>
        <taxon>Ecdysozoa</taxon>
        <taxon>Arthropoda</taxon>
        <taxon>Hexapoda</taxon>
        <taxon>Insecta</taxon>
        <taxon>Pterygota</taxon>
        <taxon>Neoptera</taxon>
        <taxon>Polyneoptera</taxon>
        <taxon>Mantophasmatodea</taxon>
        <taxon>Austrophasmatidae</taxon>
        <taxon>Hemilobophasma</taxon>
    </lineage>
</organism>
<protein>
    <recommendedName>
        <fullName evidence="4">Pyrokinin-1</fullName>
        <shortName evidence="4">PK-1</shortName>
    </recommendedName>
    <alternativeName>
        <fullName evidence="1">YXPRL-amide</fullName>
    </alternativeName>
</protein>
<feature type="peptide" id="PRO_0000421576" description="Pyrokinin-1" evidence="3">
    <location>
        <begin position="1"/>
        <end position="7"/>
    </location>
</feature>
<feature type="modified residue" description="Leucine amide" evidence="3">
    <location>
        <position position="7"/>
    </location>
</feature>
<accession>B3A0D0</accession>
<keyword id="KW-0027">Amidation</keyword>
<keyword id="KW-0903">Direct protein sequencing</keyword>
<keyword id="KW-0527">Neuropeptide</keyword>
<keyword id="KW-0964">Secreted</keyword>